<comment type="function">
    <text evidence="1">One of the primary rRNA binding proteins, it binds directly to 16S rRNA central domain where it helps coordinate assembly of the platform of the 30S subunit.</text>
</comment>
<comment type="subunit">
    <text evidence="1">Part of the 30S ribosomal subunit. Contacts proteins S5 and S12.</text>
</comment>
<comment type="similarity">
    <text evidence="1">Belongs to the universal ribosomal protein uS8 family.</text>
</comment>
<sequence>MTMTDPIADMLTRLRNASAAKHETVDMPYSKFKANIAEILKREGYIKDFTAKEAKVGQTLEVTLKYGPNGERSIQGIKRISKPGLRRYAKSDSLPMPLGGLGIAIISTSSGLLTQKECLDRGIGGEIVAFVW</sequence>
<reference key="1">
    <citation type="journal article" date="2002" name="Proc. Natl. Acad. Sci. U.S.A.">
        <title>The genome sequence of Bifidobacterium longum reflects its adaptation to the human gastrointestinal tract.</title>
        <authorList>
            <person name="Schell M.A."/>
            <person name="Karmirantzou M."/>
            <person name="Snel B."/>
            <person name="Vilanova D."/>
            <person name="Berger B."/>
            <person name="Pessi G."/>
            <person name="Zwahlen M.-C."/>
            <person name="Desiere F."/>
            <person name="Bork P."/>
            <person name="Delley M."/>
            <person name="Pridmore R.D."/>
            <person name="Arigoni F."/>
        </authorList>
    </citation>
    <scope>NUCLEOTIDE SEQUENCE [LARGE SCALE GENOMIC DNA]</scope>
    <source>
        <strain>NCC 2705</strain>
    </source>
</reference>
<accession>Q8G404</accession>
<gene>
    <name evidence="1" type="primary">rpsH</name>
    <name type="ordered locus">BL1594</name>
</gene>
<proteinExistence type="inferred from homology"/>
<name>RS8_BIFLO</name>
<feature type="chain" id="PRO_0000126371" description="Small ribosomal subunit protein uS8">
    <location>
        <begin position="1"/>
        <end position="132"/>
    </location>
</feature>
<evidence type="ECO:0000255" key="1">
    <source>
        <dbReference type="HAMAP-Rule" id="MF_01302"/>
    </source>
</evidence>
<evidence type="ECO:0000305" key="2"/>
<dbReference type="EMBL" id="AE014295">
    <property type="protein sequence ID" value="AAN25383.1"/>
    <property type="molecule type" value="Genomic_DNA"/>
</dbReference>
<dbReference type="RefSeq" id="NP_696747.1">
    <property type="nucleotide sequence ID" value="NC_004307.2"/>
</dbReference>
<dbReference type="RefSeq" id="WP_003829896.1">
    <property type="nucleotide sequence ID" value="NC_004307.2"/>
</dbReference>
<dbReference type="SMR" id="Q8G404"/>
<dbReference type="STRING" id="206672.BL1594"/>
<dbReference type="EnsemblBacteria" id="AAN25383">
    <property type="protein sequence ID" value="AAN25383"/>
    <property type="gene ID" value="BL1594"/>
</dbReference>
<dbReference type="GeneID" id="69578883"/>
<dbReference type="KEGG" id="blo:BL1594"/>
<dbReference type="PATRIC" id="fig|206672.9.peg.1649"/>
<dbReference type="HOGENOM" id="CLU_098428_0_1_11"/>
<dbReference type="OrthoDB" id="9802617at2"/>
<dbReference type="PhylomeDB" id="Q8G404"/>
<dbReference type="PRO" id="PR:Q8G404"/>
<dbReference type="Proteomes" id="UP000000439">
    <property type="component" value="Chromosome"/>
</dbReference>
<dbReference type="GO" id="GO:1990904">
    <property type="term" value="C:ribonucleoprotein complex"/>
    <property type="evidence" value="ECO:0007669"/>
    <property type="project" value="UniProtKB-KW"/>
</dbReference>
<dbReference type="GO" id="GO:0005840">
    <property type="term" value="C:ribosome"/>
    <property type="evidence" value="ECO:0007669"/>
    <property type="project" value="UniProtKB-KW"/>
</dbReference>
<dbReference type="GO" id="GO:0019843">
    <property type="term" value="F:rRNA binding"/>
    <property type="evidence" value="ECO:0007669"/>
    <property type="project" value="UniProtKB-UniRule"/>
</dbReference>
<dbReference type="GO" id="GO:0003735">
    <property type="term" value="F:structural constituent of ribosome"/>
    <property type="evidence" value="ECO:0007669"/>
    <property type="project" value="InterPro"/>
</dbReference>
<dbReference type="GO" id="GO:0006412">
    <property type="term" value="P:translation"/>
    <property type="evidence" value="ECO:0007669"/>
    <property type="project" value="UniProtKB-UniRule"/>
</dbReference>
<dbReference type="FunFam" id="3.30.1370.30:FF:000002">
    <property type="entry name" value="30S ribosomal protein S8"/>
    <property type="match status" value="1"/>
</dbReference>
<dbReference type="FunFam" id="3.30.1490.10:FF:000001">
    <property type="entry name" value="30S ribosomal protein S8"/>
    <property type="match status" value="1"/>
</dbReference>
<dbReference type="Gene3D" id="3.30.1370.30">
    <property type="match status" value="1"/>
</dbReference>
<dbReference type="Gene3D" id="3.30.1490.10">
    <property type="match status" value="1"/>
</dbReference>
<dbReference type="HAMAP" id="MF_01302_B">
    <property type="entry name" value="Ribosomal_uS8_B"/>
    <property type="match status" value="1"/>
</dbReference>
<dbReference type="InterPro" id="IPR000630">
    <property type="entry name" value="Ribosomal_uS8"/>
</dbReference>
<dbReference type="InterPro" id="IPR035987">
    <property type="entry name" value="Ribosomal_uS8_sf"/>
</dbReference>
<dbReference type="NCBIfam" id="NF001109">
    <property type="entry name" value="PRK00136.1"/>
    <property type="match status" value="1"/>
</dbReference>
<dbReference type="PANTHER" id="PTHR11758">
    <property type="entry name" value="40S RIBOSOMAL PROTEIN S15A"/>
    <property type="match status" value="1"/>
</dbReference>
<dbReference type="Pfam" id="PF00410">
    <property type="entry name" value="Ribosomal_S8"/>
    <property type="match status" value="1"/>
</dbReference>
<dbReference type="SUPFAM" id="SSF56047">
    <property type="entry name" value="Ribosomal protein S8"/>
    <property type="match status" value="1"/>
</dbReference>
<protein>
    <recommendedName>
        <fullName evidence="1">Small ribosomal subunit protein uS8</fullName>
    </recommendedName>
    <alternativeName>
        <fullName evidence="2">30S ribosomal protein S8</fullName>
    </alternativeName>
</protein>
<organism>
    <name type="scientific">Bifidobacterium longum (strain NCC 2705)</name>
    <dbReference type="NCBI Taxonomy" id="206672"/>
    <lineage>
        <taxon>Bacteria</taxon>
        <taxon>Bacillati</taxon>
        <taxon>Actinomycetota</taxon>
        <taxon>Actinomycetes</taxon>
        <taxon>Bifidobacteriales</taxon>
        <taxon>Bifidobacteriaceae</taxon>
        <taxon>Bifidobacterium</taxon>
    </lineage>
</organism>
<keyword id="KW-1185">Reference proteome</keyword>
<keyword id="KW-0687">Ribonucleoprotein</keyword>
<keyword id="KW-0689">Ribosomal protein</keyword>
<keyword id="KW-0694">RNA-binding</keyword>
<keyword id="KW-0699">rRNA-binding</keyword>